<comment type="similarity">
    <text evidence="1">Belongs to the UPF0102 family.</text>
</comment>
<dbReference type="EMBL" id="CP001336">
    <property type="protein sequence ID" value="ACL21756.1"/>
    <property type="molecule type" value="Genomic_DNA"/>
</dbReference>
<dbReference type="RefSeq" id="WP_015944758.1">
    <property type="nucleotide sequence ID" value="NC_011830.1"/>
</dbReference>
<dbReference type="SMR" id="B8FRJ6"/>
<dbReference type="KEGG" id="dhd:Dhaf_3740"/>
<dbReference type="HOGENOM" id="CLU_115353_2_3_9"/>
<dbReference type="Proteomes" id="UP000007726">
    <property type="component" value="Chromosome"/>
</dbReference>
<dbReference type="GO" id="GO:0003676">
    <property type="term" value="F:nucleic acid binding"/>
    <property type="evidence" value="ECO:0007669"/>
    <property type="project" value="InterPro"/>
</dbReference>
<dbReference type="CDD" id="cd20736">
    <property type="entry name" value="PoNe_Nuclease"/>
    <property type="match status" value="1"/>
</dbReference>
<dbReference type="Gene3D" id="3.40.1350.10">
    <property type="match status" value="1"/>
</dbReference>
<dbReference type="HAMAP" id="MF_00048">
    <property type="entry name" value="UPF0102"/>
    <property type="match status" value="1"/>
</dbReference>
<dbReference type="InterPro" id="IPR011335">
    <property type="entry name" value="Restrct_endonuc-II-like"/>
</dbReference>
<dbReference type="InterPro" id="IPR011856">
    <property type="entry name" value="tRNA_endonuc-like_dom_sf"/>
</dbReference>
<dbReference type="InterPro" id="IPR003509">
    <property type="entry name" value="UPF0102_YraN-like"/>
</dbReference>
<dbReference type="NCBIfam" id="NF009150">
    <property type="entry name" value="PRK12497.1-3"/>
    <property type="match status" value="1"/>
</dbReference>
<dbReference type="NCBIfam" id="NF009154">
    <property type="entry name" value="PRK12497.3-3"/>
    <property type="match status" value="1"/>
</dbReference>
<dbReference type="NCBIfam" id="TIGR00252">
    <property type="entry name" value="YraN family protein"/>
    <property type="match status" value="1"/>
</dbReference>
<dbReference type="PANTHER" id="PTHR34039">
    <property type="entry name" value="UPF0102 PROTEIN YRAN"/>
    <property type="match status" value="1"/>
</dbReference>
<dbReference type="PANTHER" id="PTHR34039:SF1">
    <property type="entry name" value="UPF0102 PROTEIN YRAN"/>
    <property type="match status" value="1"/>
</dbReference>
<dbReference type="Pfam" id="PF02021">
    <property type="entry name" value="UPF0102"/>
    <property type="match status" value="1"/>
</dbReference>
<dbReference type="SUPFAM" id="SSF52980">
    <property type="entry name" value="Restriction endonuclease-like"/>
    <property type="match status" value="1"/>
</dbReference>
<reference key="1">
    <citation type="journal article" date="2012" name="BMC Microbiol.">
        <title>Genome sequence of Desulfitobacterium hafniense DCB-2, a Gram-positive anaerobe capable of dehalogenation and metal reduction.</title>
        <authorList>
            <person name="Kim S.H."/>
            <person name="Harzman C."/>
            <person name="Davis J.K."/>
            <person name="Hutcheson R."/>
            <person name="Broderick J.B."/>
            <person name="Marsh T.L."/>
            <person name="Tiedje J.M."/>
        </authorList>
    </citation>
    <scope>NUCLEOTIDE SEQUENCE [LARGE SCALE GENOMIC DNA]</scope>
    <source>
        <strain>DSM 10664 / DCB-2</strain>
    </source>
</reference>
<protein>
    <recommendedName>
        <fullName evidence="1">UPF0102 protein Dhaf_3740</fullName>
    </recommendedName>
</protein>
<name>Y3740_DESHD</name>
<sequence>MSEHRQALGRYGEELAVKHIRQAGLTVLECNYRCPLGEMDIIAQEGETIIFIEVRTRSTGSRGWGEESITAKKRERLYRIATHYLKFRNYKEWPSLRFDLIAIRCQNQEGKQPDIIWIRGI</sequence>
<accession>B8FRJ6</accession>
<gene>
    <name type="ordered locus">Dhaf_3740</name>
</gene>
<evidence type="ECO:0000255" key="1">
    <source>
        <dbReference type="HAMAP-Rule" id="MF_00048"/>
    </source>
</evidence>
<organism>
    <name type="scientific">Desulfitobacterium hafniense (strain DSM 10664 / DCB-2)</name>
    <dbReference type="NCBI Taxonomy" id="272564"/>
    <lineage>
        <taxon>Bacteria</taxon>
        <taxon>Bacillati</taxon>
        <taxon>Bacillota</taxon>
        <taxon>Clostridia</taxon>
        <taxon>Eubacteriales</taxon>
        <taxon>Desulfitobacteriaceae</taxon>
        <taxon>Desulfitobacterium</taxon>
    </lineage>
</organism>
<proteinExistence type="inferred from homology"/>
<feature type="chain" id="PRO_1000200135" description="UPF0102 protein Dhaf_3740">
    <location>
        <begin position="1"/>
        <end position="121"/>
    </location>
</feature>